<comment type="function">
    <text evidence="2">Transaldolase is important for the balance of metabolites in the pentose-phosphate pathway.</text>
</comment>
<comment type="catalytic activity">
    <reaction evidence="2">
        <text>D-sedoheptulose 7-phosphate + D-glyceraldehyde 3-phosphate = D-erythrose 4-phosphate + beta-D-fructose 6-phosphate</text>
        <dbReference type="Rhea" id="RHEA:17053"/>
        <dbReference type="ChEBI" id="CHEBI:16897"/>
        <dbReference type="ChEBI" id="CHEBI:57483"/>
        <dbReference type="ChEBI" id="CHEBI:57634"/>
        <dbReference type="ChEBI" id="CHEBI:59776"/>
        <dbReference type="EC" id="2.2.1.2"/>
    </reaction>
</comment>
<comment type="pathway">
    <text evidence="2">Carbohydrate degradation; pentose phosphate pathway; D-glyceraldehyde 3-phosphate and beta-D-fructose 6-phosphate from D-ribose 5-phosphate and D-xylulose 5-phosphate (non-oxidative stage): step 2/3.</text>
</comment>
<comment type="subunit">
    <text evidence="1">Homodimer.</text>
</comment>
<comment type="subcellular location">
    <subcellularLocation>
        <location evidence="2">Cytoplasm</location>
    </subcellularLocation>
</comment>
<comment type="similarity">
    <text evidence="2">Belongs to the transaldolase family. Type 1 subfamily.</text>
</comment>
<evidence type="ECO:0000250" key="1"/>
<evidence type="ECO:0000255" key="2">
    <source>
        <dbReference type="HAMAP-Rule" id="MF_00492"/>
    </source>
</evidence>
<protein>
    <recommendedName>
        <fullName evidence="2">Transaldolase</fullName>
        <ecNumber evidence="2">2.2.1.2</ecNumber>
    </recommendedName>
</protein>
<accession>B8D8P5</accession>
<name>TAL_BUCA5</name>
<gene>
    <name evidence="2" type="primary">tal</name>
    <name type="ordered locus">BUAP5A_091</name>
</gene>
<organism>
    <name type="scientific">Buchnera aphidicola subsp. Acyrthosiphon pisum (strain 5A)</name>
    <dbReference type="NCBI Taxonomy" id="563178"/>
    <lineage>
        <taxon>Bacteria</taxon>
        <taxon>Pseudomonadati</taxon>
        <taxon>Pseudomonadota</taxon>
        <taxon>Gammaproteobacteria</taxon>
        <taxon>Enterobacterales</taxon>
        <taxon>Erwiniaceae</taxon>
        <taxon>Buchnera</taxon>
    </lineage>
</organism>
<feature type="chain" id="PRO_1000198451" description="Transaldolase">
    <location>
        <begin position="1"/>
        <end position="316"/>
    </location>
</feature>
<feature type="active site" description="Schiff-base intermediate with substrate" evidence="2">
    <location>
        <position position="131"/>
    </location>
</feature>
<sequence length="316" mass="35564">MNQLSALKQFSIIVADTSDIKSICKYQPEDATTNPSLILQAVSSNTNQNFVDQAVQYAKKKGGLYKDQIINASDKILVDLGIEILKKIPGYISSEVDARLSFSTEASILKAKKIIDLYEEQGISRNRVLIKLAATWECIKAAEELKKDSILCNLTLLFSFAQARACAESNVFLISPFVGRIYDWYISQNLLSKSFLGKDPGVISVCKIYEYYKKYGYKTIIMGASFRNIQQILYLSGCDRLTISPVLLKELESNTAKIDRNLAPPSFISVPPVALSEEEFRWEHNQDAMAVQKLSDGIRNFGKDQLRLEKIFSKKI</sequence>
<reference key="1">
    <citation type="journal article" date="2009" name="Science">
        <title>The dynamics and time scale of ongoing genomic erosion in symbiotic bacteria.</title>
        <authorList>
            <person name="Moran N.A."/>
            <person name="McLaughlin H.J."/>
            <person name="Sorek R."/>
        </authorList>
    </citation>
    <scope>NUCLEOTIDE SEQUENCE [LARGE SCALE GENOMIC DNA]</scope>
    <source>
        <strain>5A</strain>
    </source>
</reference>
<proteinExistence type="inferred from homology"/>
<dbReference type="EC" id="2.2.1.2" evidence="2"/>
<dbReference type="EMBL" id="CP001161">
    <property type="protein sequence ID" value="ACL30467.1"/>
    <property type="molecule type" value="Genomic_DNA"/>
</dbReference>
<dbReference type="RefSeq" id="WP_009874046.1">
    <property type="nucleotide sequence ID" value="NC_011833.1"/>
</dbReference>
<dbReference type="SMR" id="B8D8P5"/>
<dbReference type="KEGG" id="bap:BUAP5A_091"/>
<dbReference type="HOGENOM" id="CLU_047470_0_1_6"/>
<dbReference type="OrthoDB" id="9809101at2"/>
<dbReference type="UniPathway" id="UPA00115">
    <property type="reaction ID" value="UER00414"/>
</dbReference>
<dbReference type="Proteomes" id="UP000006904">
    <property type="component" value="Chromosome"/>
</dbReference>
<dbReference type="GO" id="GO:0005829">
    <property type="term" value="C:cytosol"/>
    <property type="evidence" value="ECO:0007669"/>
    <property type="project" value="TreeGrafter"/>
</dbReference>
<dbReference type="GO" id="GO:0004801">
    <property type="term" value="F:transaldolase activity"/>
    <property type="evidence" value="ECO:0000250"/>
    <property type="project" value="UniProtKB"/>
</dbReference>
<dbReference type="GO" id="GO:0005975">
    <property type="term" value="P:carbohydrate metabolic process"/>
    <property type="evidence" value="ECO:0007669"/>
    <property type="project" value="InterPro"/>
</dbReference>
<dbReference type="GO" id="GO:0006098">
    <property type="term" value="P:pentose-phosphate shunt"/>
    <property type="evidence" value="ECO:0007669"/>
    <property type="project" value="UniProtKB-UniRule"/>
</dbReference>
<dbReference type="CDD" id="cd00957">
    <property type="entry name" value="Transaldolase_TalAB"/>
    <property type="match status" value="1"/>
</dbReference>
<dbReference type="FunFam" id="3.20.20.70:FF:000131">
    <property type="entry name" value="Transaldolase"/>
    <property type="match status" value="1"/>
</dbReference>
<dbReference type="Gene3D" id="3.20.20.70">
    <property type="entry name" value="Aldolase class I"/>
    <property type="match status" value="1"/>
</dbReference>
<dbReference type="HAMAP" id="MF_00492">
    <property type="entry name" value="Transaldolase_1"/>
    <property type="match status" value="1"/>
</dbReference>
<dbReference type="InterPro" id="IPR013785">
    <property type="entry name" value="Aldolase_TIM"/>
</dbReference>
<dbReference type="InterPro" id="IPR001585">
    <property type="entry name" value="TAL/FSA"/>
</dbReference>
<dbReference type="InterPro" id="IPR004730">
    <property type="entry name" value="Transaldolase_1"/>
</dbReference>
<dbReference type="InterPro" id="IPR018225">
    <property type="entry name" value="Transaldolase_AS"/>
</dbReference>
<dbReference type="NCBIfam" id="NF009001">
    <property type="entry name" value="PRK12346.1"/>
    <property type="match status" value="1"/>
</dbReference>
<dbReference type="NCBIfam" id="TIGR00874">
    <property type="entry name" value="talAB"/>
    <property type="match status" value="1"/>
</dbReference>
<dbReference type="PANTHER" id="PTHR10683">
    <property type="entry name" value="TRANSALDOLASE"/>
    <property type="match status" value="1"/>
</dbReference>
<dbReference type="PANTHER" id="PTHR10683:SF16">
    <property type="entry name" value="TRANSALDOLASE A"/>
    <property type="match status" value="1"/>
</dbReference>
<dbReference type="Pfam" id="PF00923">
    <property type="entry name" value="TAL_FSA"/>
    <property type="match status" value="1"/>
</dbReference>
<dbReference type="SUPFAM" id="SSF51569">
    <property type="entry name" value="Aldolase"/>
    <property type="match status" value="1"/>
</dbReference>
<dbReference type="PROSITE" id="PS01054">
    <property type="entry name" value="TRANSALDOLASE_1"/>
    <property type="match status" value="1"/>
</dbReference>
<dbReference type="PROSITE" id="PS00958">
    <property type="entry name" value="TRANSALDOLASE_2"/>
    <property type="match status" value="1"/>
</dbReference>
<keyword id="KW-0963">Cytoplasm</keyword>
<keyword id="KW-0570">Pentose shunt</keyword>
<keyword id="KW-0704">Schiff base</keyword>
<keyword id="KW-0808">Transferase</keyword>